<gene>
    <name evidence="1" type="primary">dapB</name>
    <name type="ordered locus">SF0028</name>
    <name type="ordered locus">S0030</name>
</gene>
<comment type="function">
    <text evidence="1">Catalyzes the conversion of 4-hydroxy-tetrahydrodipicolinate (HTPA) to tetrahydrodipicolinate.</text>
</comment>
<comment type="catalytic activity">
    <reaction evidence="1">
        <text>(S)-2,3,4,5-tetrahydrodipicolinate + NAD(+) + H2O = (2S,4S)-4-hydroxy-2,3,4,5-tetrahydrodipicolinate + NADH + H(+)</text>
        <dbReference type="Rhea" id="RHEA:35323"/>
        <dbReference type="ChEBI" id="CHEBI:15377"/>
        <dbReference type="ChEBI" id="CHEBI:15378"/>
        <dbReference type="ChEBI" id="CHEBI:16845"/>
        <dbReference type="ChEBI" id="CHEBI:57540"/>
        <dbReference type="ChEBI" id="CHEBI:57945"/>
        <dbReference type="ChEBI" id="CHEBI:67139"/>
        <dbReference type="EC" id="1.17.1.8"/>
    </reaction>
</comment>
<comment type="catalytic activity">
    <reaction evidence="1">
        <text>(S)-2,3,4,5-tetrahydrodipicolinate + NADP(+) + H2O = (2S,4S)-4-hydroxy-2,3,4,5-tetrahydrodipicolinate + NADPH + H(+)</text>
        <dbReference type="Rhea" id="RHEA:35331"/>
        <dbReference type="ChEBI" id="CHEBI:15377"/>
        <dbReference type="ChEBI" id="CHEBI:15378"/>
        <dbReference type="ChEBI" id="CHEBI:16845"/>
        <dbReference type="ChEBI" id="CHEBI:57783"/>
        <dbReference type="ChEBI" id="CHEBI:58349"/>
        <dbReference type="ChEBI" id="CHEBI:67139"/>
        <dbReference type="EC" id="1.17.1.8"/>
    </reaction>
</comment>
<comment type="pathway">
    <text evidence="1">Amino-acid biosynthesis; L-lysine biosynthesis via DAP pathway; (S)-tetrahydrodipicolinate from L-aspartate: step 4/4.</text>
</comment>
<comment type="subunit">
    <text evidence="1">Homotetramer.</text>
</comment>
<comment type="subcellular location">
    <subcellularLocation>
        <location evidence="1">Cytoplasm</location>
    </subcellularLocation>
</comment>
<comment type="similarity">
    <text evidence="1">Belongs to the DapB family.</text>
</comment>
<comment type="caution">
    <text evidence="2">Was originally thought to be a dihydrodipicolinate reductase (DHDPR), catalyzing the conversion of dihydrodipicolinate to tetrahydrodipicolinate. However, it was shown in E.coli that the substrate of the enzymatic reaction is not dihydrodipicolinate (DHDP) but in fact (2S,4S)-4-hydroxy-2,3,4,5-tetrahydrodipicolinic acid (HTPA), the product released by the DapA-catalyzed reaction.</text>
</comment>
<organism>
    <name type="scientific">Shigella flexneri</name>
    <dbReference type="NCBI Taxonomy" id="623"/>
    <lineage>
        <taxon>Bacteria</taxon>
        <taxon>Pseudomonadati</taxon>
        <taxon>Pseudomonadota</taxon>
        <taxon>Gammaproteobacteria</taxon>
        <taxon>Enterobacterales</taxon>
        <taxon>Enterobacteriaceae</taxon>
        <taxon>Shigella</taxon>
    </lineage>
</organism>
<proteinExistence type="inferred from homology"/>
<sequence>MHDANIRVAIAGAGGRMGRQLIQAALALEGVQLGAALEREGSSLLGSDAGELAGAGKTGVTVQSSLDAIKDDFDVFIDFTRPEGTLNHLAFCRQHGKGMVIGTTGFDEAGKQAIRDAAADIAIVFAANFSVGVNVMLKLLEKAAKVMGDYTDIEIIEAHHRHKVDAPSGTALAMGEAIAHALDKDLKDCAVYSREGHTGERVPGTIGFATVRAGDIVGEHTAMFADIGERLEITHKASSRMTFANGAVRSALWLSGKESGLFDMRDVLDLNNL</sequence>
<keyword id="KW-0028">Amino-acid biosynthesis</keyword>
<keyword id="KW-0963">Cytoplasm</keyword>
<keyword id="KW-0220">Diaminopimelate biosynthesis</keyword>
<keyword id="KW-0457">Lysine biosynthesis</keyword>
<keyword id="KW-0520">NAD</keyword>
<keyword id="KW-0521">NADP</keyword>
<keyword id="KW-0560">Oxidoreductase</keyword>
<keyword id="KW-1185">Reference proteome</keyword>
<reference key="1">
    <citation type="journal article" date="2002" name="Nucleic Acids Res.">
        <title>Genome sequence of Shigella flexneri 2a: insights into pathogenicity through comparison with genomes of Escherichia coli K12 and O157.</title>
        <authorList>
            <person name="Jin Q."/>
            <person name="Yuan Z."/>
            <person name="Xu J."/>
            <person name="Wang Y."/>
            <person name="Shen Y."/>
            <person name="Lu W."/>
            <person name="Wang J."/>
            <person name="Liu H."/>
            <person name="Yang J."/>
            <person name="Yang F."/>
            <person name="Zhang X."/>
            <person name="Zhang J."/>
            <person name="Yang G."/>
            <person name="Wu H."/>
            <person name="Qu D."/>
            <person name="Dong J."/>
            <person name="Sun L."/>
            <person name="Xue Y."/>
            <person name="Zhao A."/>
            <person name="Gao Y."/>
            <person name="Zhu J."/>
            <person name="Kan B."/>
            <person name="Ding K."/>
            <person name="Chen S."/>
            <person name="Cheng H."/>
            <person name="Yao Z."/>
            <person name="He B."/>
            <person name="Chen R."/>
            <person name="Ma D."/>
            <person name="Qiang B."/>
            <person name="Wen Y."/>
            <person name="Hou Y."/>
            <person name="Yu J."/>
        </authorList>
    </citation>
    <scope>NUCLEOTIDE SEQUENCE [LARGE SCALE GENOMIC DNA]</scope>
    <source>
        <strain>301 / Serotype 2a</strain>
    </source>
</reference>
<reference key="2">
    <citation type="journal article" date="2003" name="Infect. Immun.">
        <title>Complete genome sequence and comparative genomics of Shigella flexneri serotype 2a strain 2457T.</title>
        <authorList>
            <person name="Wei J."/>
            <person name="Goldberg M.B."/>
            <person name="Burland V."/>
            <person name="Venkatesan M.M."/>
            <person name="Deng W."/>
            <person name="Fournier G."/>
            <person name="Mayhew G.F."/>
            <person name="Plunkett G. III"/>
            <person name="Rose D.J."/>
            <person name="Darling A."/>
            <person name="Mau B."/>
            <person name="Perna N.T."/>
            <person name="Payne S.M."/>
            <person name="Runyen-Janecky L.J."/>
            <person name="Zhou S."/>
            <person name="Schwartz D.C."/>
            <person name="Blattner F.R."/>
        </authorList>
    </citation>
    <scope>NUCLEOTIDE SEQUENCE [LARGE SCALE GENOMIC DNA]</scope>
    <source>
        <strain>ATCC 700930 / 2457T / Serotype 2a</strain>
    </source>
</reference>
<name>DAPB_SHIFL</name>
<dbReference type="EC" id="1.17.1.8" evidence="1"/>
<dbReference type="EMBL" id="AE005674">
    <property type="protein sequence ID" value="AAN41694.1"/>
    <property type="molecule type" value="Genomic_DNA"/>
</dbReference>
<dbReference type="EMBL" id="AE014073">
    <property type="protein sequence ID" value="AAP15575.1"/>
    <property type="molecule type" value="Genomic_DNA"/>
</dbReference>
<dbReference type="RefSeq" id="NP_705987.1">
    <property type="nucleotide sequence ID" value="NC_004337.2"/>
</dbReference>
<dbReference type="RefSeq" id="WP_000543585.1">
    <property type="nucleotide sequence ID" value="NZ_WPGW01000005.1"/>
</dbReference>
<dbReference type="SMR" id="Q83SQ9"/>
<dbReference type="STRING" id="198214.SF0028"/>
<dbReference type="PaxDb" id="198214-SF0028"/>
<dbReference type="GeneID" id="1024579"/>
<dbReference type="KEGG" id="sfl:SF0028"/>
<dbReference type="KEGG" id="sfx:S0030"/>
<dbReference type="PATRIC" id="fig|198214.7.peg.31"/>
<dbReference type="HOGENOM" id="CLU_047479_2_1_6"/>
<dbReference type="UniPathway" id="UPA00034">
    <property type="reaction ID" value="UER00018"/>
</dbReference>
<dbReference type="Proteomes" id="UP000001006">
    <property type="component" value="Chromosome"/>
</dbReference>
<dbReference type="Proteomes" id="UP000002673">
    <property type="component" value="Chromosome"/>
</dbReference>
<dbReference type="GO" id="GO:0005829">
    <property type="term" value="C:cytosol"/>
    <property type="evidence" value="ECO:0007669"/>
    <property type="project" value="TreeGrafter"/>
</dbReference>
<dbReference type="GO" id="GO:0008839">
    <property type="term" value="F:4-hydroxy-tetrahydrodipicolinate reductase"/>
    <property type="evidence" value="ECO:0007669"/>
    <property type="project" value="UniProtKB-EC"/>
</dbReference>
<dbReference type="GO" id="GO:0051287">
    <property type="term" value="F:NAD binding"/>
    <property type="evidence" value="ECO:0007669"/>
    <property type="project" value="UniProtKB-UniRule"/>
</dbReference>
<dbReference type="GO" id="GO:0050661">
    <property type="term" value="F:NADP binding"/>
    <property type="evidence" value="ECO:0007669"/>
    <property type="project" value="UniProtKB-UniRule"/>
</dbReference>
<dbReference type="GO" id="GO:0016726">
    <property type="term" value="F:oxidoreductase activity, acting on CH or CH2 groups, NAD or NADP as acceptor"/>
    <property type="evidence" value="ECO:0007669"/>
    <property type="project" value="UniProtKB-UniRule"/>
</dbReference>
<dbReference type="GO" id="GO:0019877">
    <property type="term" value="P:diaminopimelate biosynthetic process"/>
    <property type="evidence" value="ECO:0007669"/>
    <property type="project" value="UniProtKB-UniRule"/>
</dbReference>
<dbReference type="GO" id="GO:0009089">
    <property type="term" value="P:lysine biosynthetic process via diaminopimelate"/>
    <property type="evidence" value="ECO:0007669"/>
    <property type="project" value="UniProtKB-UniRule"/>
</dbReference>
<dbReference type="CDD" id="cd02274">
    <property type="entry name" value="DHDPR_N"/>
    <property type="match status" value="1"/>
</dbReference>
<dbReference type="FunFam" id="3.30.360.10:FF:000004">
    <property type="entry name" value="4-hydroxy-tetrahydrodipicolinate reductase"/>
    <property type="match status" value="1"/>
</dbReference>
<dbReference type="FunFam" id="3.40.50.720:FF:000048">
    <property type="entry name" value="4-hydroxy-tetrahydrodipicolinate reductase"/>
    <property type="match status" value="1"/>
</dbReference>
<dbReference type="Gene3D" id="3.30.360.10">
    <property type="entry name" value="Dihydrodipicolinate Reductase, domain 2"/>
    <property type="match status" value="1"/>
</dbReference>
<dbReference type="Gene3D" id="3.40.50.720">
    <property type="entry name" value="NAD(P)-binding Rossmann-like Domain"/>
    <property type="match status" value="1"/>
</dbReference>
<dbReference type="HAMAP" id="MF_00102">
    <property type="entry name" value="DapB"/>
    <property type="match status" value="1"/>
</dbReference>
<dbReference type="InterPro" id="IPR022663">
    <property type="entry name" value="DapB_C"/>
</dbReference>
<dbReference type="InterPro" id="IPR000846">
    <property type="entry name" value="DapB_N"/>
</dbReference>
<dbReference type="InterPro" id="IPR022664">
    <property type="entry name" value="DapB_N_CS"/>
</dbReference>
<dbReference type="InterPro" id="IPR023940">
    <property type="entry name" value="DHDPR_bac"/>
</dbReference>
<dbReference type="InterPro" id="IPR036291">
    <property type="entry name" value="NAD(P)-bd_dom_sf"/>
</dbReference>
<dbReference type="NCBIfam" id="TIGR00036">
    <property type="entry name" value="dapB"/>
    <property type="match status" value="1"/>
</dbReference>
<dbReference type="PANTHER" id="PTHR20836:SF0">
    <property type="entry name" value="4-HYDROXY-TETRAHYDRODIPICOLINATE REDUCTASE 1, CHLOROPLASTIC-RELATED"/>
    <property type="match status" value="1"/>
</dbReference>
<dbReference type="PANTHER" id="PTHR20836">
    <property type="entry name" value="DIHYDRODIPICOLINATE REDUCTASE"/>
    <property type="match status" value="1"/>
</dbReference>
<dbReference type="Pfam" id="PF05173">
    <property type="entry name" value="DapB_C"/>
    <property type="match status" value="1"/>
</dbReference>
<dbReference type="Pfam" id="PF01113">
    <property type="entry name" value="DapB_N"/>
    <property type="match status" value="1"/>
</dbReference>
<dbReference type="PIRSF" id="PIRSF000161">
    <property type="entry name" value="DHPR"/>
    <property type="match status" value="1"/>
</dbReference>
<dbReference type="SUPFAM" id="SSF55347">
    <property type="entry name" value="Glyceraldehyde-3-phosphate dehydrogenase-like, C-terminal domain"/>
    <property type="match status" value="1"/>
</dbReference>
<dbReference type="SUPFAM" id="SSF51735">
    <property type="entry name" value="NAD(P)-binding Rossmann-fold domains"/>
    <property type="match status" value="1"/>
</dbReference>
<dbReference type="PROSITE" id="PS01298">
    <property type="entry name" value="DAPB"/>
    <property type="match status" value="1"/>
</dbReference>
<protein>
    <recommendedName>
        <fullName evidence="1">4-hydroxy-tetrahydrodipicolinate reductase</fullName>
        <shortName evidence="1">HTPA reductase</shortName>
        <ecNumber evidence="1">1.17.1.8</ecNumber>
    </recommendedName>
</protein>
<evidence type="ECO:0000255" key="1">
    <source>
        <dbReference type="HAMAP-Rule" id="MF_00102"/>
    </source>
</evidence>
<evidence type="ECO:0000305" key="2"/>
<feature type="chain" id="PRO_0000141484" description="4-hydroxy-tetrahydrodipicolinate reductase">
    <location>
        <begin position="1"/>
        <end position="273"/>
    </location>
</feature>
<feature type="active site" description="Proton donor/acceptor" evidence="1">
    <location>
        <position position="159"/>
    </location>
</feature>
<feature type="active site" description="Proton donor" evidence="1">
    <location>
        <position position="163"/>
    </location>
</feature>
<feature type="binding site" evidence="1">
    <location>
        <begin position="12"/>
        <end position="17"/>
    </location>
    <ligand>
        <name>NAD(+)</name>
        <dbReference type="ChEBI" id="CHEBI:57540"/>
    </ligand>
</feature>
<feature type="binding site" evidence="1">
    <location>
        <position position="38"/>
    </location>
    <ligand>
        <name>NAD(+)</name>
        <dbReference type="ChEBI" id="CHEBI:57540"/>
    </ligand>
</feature>
<feature type="binding site" evidence="1">
    <location>
        <position position="39"/>
    </location>
    <ligand>
        <name>NADP(+)</name>
        <dbReference type="ChEBI" id="CHEBI:58349"/>
    </ligand>
</feature>
<feature type="binding site" evidence="1">
    <location>
        <begin position="102"/>
        <end position="104"/>
    </location>
    <ligand>
        <name>NAD(+)</name>
        <dbReference type="ChEBI" id="CHEBI:57540"/>
    </ligand>
</feature>
<feature type="binding site" evidence="1">
    <location>
        <begin position="126"/>
        <end position="129"/>
    </location>
    <ligand>
        <name>NAD(+)</name>
        <dbReference type="ChEBI" id="CHEBI:57540"/>
    </ligand>
</feature>
<feature type="binding site" evidence="1">
    <location>
        <position position="160"/>
    </location>
    <ligand>
        <name>(S)-2,3,4,5-tetrahydrodipicolinate</name>
        <dbReference type="ChEBI" id="CHEBI:16845"/>
    </ligand>
</feature>
<feature type="binding site" evidence="1">
    <location>
        <begin position="169"/>
        <end position="170"/>
    </location>
    <ligand>
        <name>(S)-2,3,4,5-tetrahydrodipicolinate</name>
        <dbReference type="ChEBI" id="CHEBI:16845"/>
    </ligand>
</feature>
<accession>Q83SQ9</accession>